<comment type="function">
    <text evidence="1">Catalyzes the transfer of a ribosyl phosphate group from 5-phosphoribose 1-diphosphate to orotate, leading to the formation of orotidine monophosphate (OMP).</text>
</comment>
<comment type="catalytic activity">
    <reaction evidence="1">
        <text>orotidine 5'-phosphate + diphosphate = orotate + 5-phospho-alpha-D-ribose 1-diphosphate</text>
        <dbReference type="Rhea" id="RHEA:10380"/>
        <dbReference type="ChEBI" id="CHEBI:30839"/>
        <dbReference type="ChEBI" id="CHEBI:33019"/>
        <dbReference type="ChEBI" id="CHEBI:57538"/>
        <dbReference type="ChEBI" id="CHEBI:58017"/>
        <dbReference type="EC" id="2.4.2.10"/>
    </reaction>
</comment>
<comment type="cofactor">
    <cofactor evidence="1">
        <name>Mg(2+)</name>
        <dbReference type="ChEBI" id="CHEBI:18420"/>
    </cofactor>
</comment>
<comment type="pathway">
    <text evidence="1">Pyrimidine metabolism; UMP biosynthesis via de novo pathway; UMP from orotate: step 1/2.</text>
</comment>
<comment type="subunit">
    <text evidence="1">Homodimer.</text>
</comment>
<comment type="similarity">
    <text evidence="1">Belongs to the purine/pyrimidine phosphoribosyltransferase family. PyrE subfamily.</text>
</comment>
<comment type="sequence caution" evidence="2">
    <conflict type="erroneous initiation">
        <sequence resource="EMBL-CDS" id="AAL64798"/>
    </conflict>
</comment>
<evidence type="ECO:0000255" key="1">
    <source>
        <dbReference type="HAMAP-Rule" id="MF_01208"/>
    </source>
</evidence>
<evidence type="ECO:0000305" key="2"/>
<organism>
    <name type="scientific">Pyrobaculum aerophilum (strain ATCC 51768 / DSM 7523 / JCM 9630 / CIP 104966 / NBRC 100827 / IM2)</name>
    <dbReference type="NCBI Taxonomy" id="178306"/>
    <lineage>
        <taxon>Archaea</taxon>
        <taxon>Thermoproteota</taxon>
        <taxon>Thermoprotei</taxon>
        <taxon>Thermoproteales</taxon>
        <taxon>Thermoproteaceae</taxon>
        <taxon>Pyrobaculum</taxon>
    </lineage>
</organism>
<dbReference type="EC" id="2.4.2.10" evidence="1"/>
<dbReference type="EMBL" id="AE009441">
    <property type="protein sequence ID" value="AAL64798.1"/>
    <property type="status" value="ALT_INIT"/>
    <property type="molecule type" value="Genomic_DNA"/>
</dbReference>
<dbReference type="RefSeq" id="WP_128621540.1">
    <property type="nucleotide sequence ID" value="NC_003364.1"/>
</dbReference>
<dbReference type="SMR" id="Q8ZTG3"/>
<dbReference type="FunCoup" id="Q8ZTG3">
    <property type="interactions" value="121"/>
</dbReference>
<dbReference type="STRING" id="178306.PAE3264"/>
<dbReference type="EnsemblBacteria" id="AAL64798">
    <property type="protein sequence ID" value="AAL64798"/>
    <property type="gene ID" value="PAE3264"/>
</dbReference>
<dbReference type="GeneID" id="1463983"/>
<dbReference type="KEGG" id="pai:PAE3264"/>
<dbReference type="PATRIC" id="fig|178306.9.peg.2458"/>
<dbReference type="eggNOG" id="arCOG00029">
    <property type="taxonomic scope" value="Archaea"/>
</dbReference>
<dbReference type="HOGENOM" id="CLU_074878_2_0_2"/>
<dbReference type="InParanoid" id="Q8ZTG3"/>
<dbReference type="UniPathway" id="UPA00070">
    <property type="reaction ID" value="UER00119"/>
</dbReference>
<dbReference type="Proteomes" id="UP000002439">
    <property type="component" value="Chromosome"/>
</dbReference>
<dbReference type="GO" id="GO:0000287">
    <property type="term" value="F:magnesium ion binding"/>
    <property type="evidence" value="ECO:0007669"/>
    <property type="project" value="UniProtKB-UniRule"/>
</dbReference>
<dbReference type="GO" id="GO:0004588">
    <property type="term" value="F:orotate phosphoribosyltransferase activity"/>
    <property type="evidence" value="ECO:0000318"/>
    <property type="project" value="GO_Central"/>
</dbReference>
<dbReference type="GO" id="GO:0044205">
    <property type="term" value="P:'de novo' UMP biosynthetic process"/>
    <property type="evidence" value="ECO:0007669"/>
    <property type="project" value="UniProtKB-UniRule"/>
</dbReference>
<dbReference type="GO" id="GO:0019856">
    <property type="term" value="P:pyrimidine nucleobase biosynthetic process"/>
    <property type="evidence" value="ECO:0000318"/>
    <property type="project" value="GO_Central"/>
</dbReference>
<dbReference type="GO" id="GO:0006222">
    <property type="term" value="P:UMP biosynthetic process"/>
    <property type="evidence" value="ECO:0000318"/>
    <property type="project" value="GO_Central"/>
</dbReference>
<dbReference type="CDD" id="cd06223">
    <property type="entry name" value="PRTases_typeI"/>
    <property type="match status" value="1"/>
</dbReference>
<dbReference type="FunFam" id="3.40.50.2020:FF:000058">
    <property type="entry name" value="Orotidine-5-phosphate decarboxylase/orotate phosphoribosyltransferase"/>
    <property type="match status" value="1"/>
</dbReference>
<dbReference type="Gene3D" id="3.40.50.2020">
    <property type="match status" value="1"/>
</dbReference>
<dbReference type="HAMAP" id="MF_01208">
    <property type="entry name" value="PyrE"/>
    <property type="match status" value="1"/>
</dbReference>
<dbReference type="InterPro" id="IPR023031">
    <property type="entry name" value="OPRT"/>
</dbReference>
<dbReference type="InterPro" id="IPR004467">
    <property type="entry name" value="Or_phspho_trans_dom"/>
</dbReference>
<dbReference type="InterPro" id="IPR000836">
    <property type="entry name" value="PRibTrfase_dom"/>
</dbReference>
<dbReference type="InterPro" id="IPR029057">
    <property type="entry name" value="PRTase-like"/>
</dbReference>
<dbReference type="NCBIfam" id="TIGR00336">
    <property type="entry name" value="pyrE"/>
    <property type="match status" value="1"/>
</dbReference>
<dbReference type="PANTHER" id="PTHR19278">
    <property type="entry name" value="OROTATE PHOSPHORIBOSYLTRANSFERASE"/>
    <property type="match status" value="1"/>
</dbReference>
<dbReference type="PANTHER" id="PTHR19278:SF9">
    <property type="entry name" value="URIDINE 5'-MONOPHOSPHATE SYNTHASE"/>
    <property type="match status" value="1"/>
</dbReference>
<dbReference type="Pfam" id="PF00156">
    <property type="entry name" value="Pribosyltran"/>
    <property type="match status" value="1"/>
</dbReference>
<dbReference type="SUPFAM" id="SSF53271">
    <property type="entry name" value="PRTase-like"/>
    <property type="match status" value="1"/>
</dbReference>
<reference key="1">
    <citation type="journal article" date="2002" name="Proc. Natl. Acad. Sci. U.S.A.">
        <title>Genome sequence of the hyperthermophilic crenarchaeon Pyrobaculum aerophilum.</title>
        <authorList>
            <person name="Fitz-Gibbon S.T."/>
            <person name="Ladner H."/>
            <person name="Kim U.-J."/>
            <person name="Stetter K.O."/>
            <person name="Simon M.I."/>
            <person name="Miller J.H."/>
        </authorList>
    </citation>
    <scope>NUCLEOTIDE SEQUENCE [LARGE SCALE GENOMIC DNA]</scope>
    <source>
        <strain>ATCC 51768 / DSM 7523 / JCM 9630 / CIP 104966 / NBRC 100827 / IM2</strain>
    </source>
</reference>
<feature type="chain" id="PRO_0000110785" description="Orotate phosphoribosyltransferase">
    <location>
        <begin position="1"/>
        <end position="193"/>
    </location>
</feature>
<feature type="binding site" evidence="1">
    <location>
        <position position="85"/>
    </location>
    <ligand>
        <name>5-phospho-alpha-D-ribose 1-diphosphate</name>
        <dbReference type="ChEBI" id="CHEBI:58017"/>
        <note>ligand shared between dimeric partners</note>
    </ligand>
</feature>
<feature type="binding site" evidence="1">
    <location>
        <position position="89"/>
    </location>
    <ligand>
        <name>5-phospho-alpha-D-ribose 1-diphosphate</name>
        <dbReference type="ChEBI" id="CHEBI:58017"/>
        <note>ligand shared between dimeric partners</note>
    </ligand>
</feature>
<feature type="binding site" description="in other chain" evidence="1">
    <location>
        <begin position="111"/>
        <end position="119"/>
    </location>
    <ligand>
        <name>5-phospho-alpha-D-ribose 1-diphosphate</name>
        <dbReference type="ChEBI" id="CHEBI:58017"/>
        <note>ligand shared between dimeric partners</note>
    </ligand>
</feature>
<feature type="binding site" evidence="1">
    <location>
        <position position="115"/>
    </location>
    <ligand>
        <name>orotate</name>
        <dbReference type="ChEBI" id="CHEBI:30839"/>
    </ligand>
</feature>
<feature type="binding site" evidence="1">
    <location>
        <position position="143"/>
    </location>
    <ligand>
        <name>orotate</name>
        <dbReference type="ChEBI" id="CHEBI:30839"/>
    </ligand>
</feature>
<proteinExistence type="inferred from homology"/>
<gene>
    <name evidence="1" type="primary">pyrE</name>
    <name type="ordered locus">PAE3264</name>
</gene>
<protein>
    <recommendedName>
        <fullName evidence="1">Orotate phosphoribosyltransferase</fullName>
        <shortName evidence="1">OPRT</shortName>
        <shortName evidence="1">OPRTase</shortName>
        <ecNumber evidence="1">2.4.2.10</ecNumber>
    </recommendedName>
</protein>
<name>PYRE_PYRAE</name>
<sequence>MIKRLVDIGAVKFGAFKLSSGLESPFYVDLRSVLGEPELFQWVIERYEAVLSGLEFDVIIGVATGGIPYASVLGYRLKKPMGYVRDEAKGYGTGRQIEGADVAGKRAAVVDDVLTTGKSVLNAIRAVRASGGEVAGVVVFLDRGQCGAEAVKREAGVYVYSVYKMRELLEELRPHIGEERYRSVLDYLSQWRC</sequence>
<keyword id="KW-0328">Glycosyltransferase</keyword>
<keyword id="KW-0460">Magnesium</keyword>
<keyword id="KW-0665">Pyrimidine biosynthesis</keyword>
<keyword id="KW-1185">Reference proteome</keyword>
<keyword id="KW-0808">Transferase</keyword>
<accession>Q8ZTG3</accession>